<comment type="function">
    <text evidence="1">Catalyzes the attachment of proline to tRNA(Pro) in a two-step reaction: proline is first activated by ATP to form Pro-AMP and then transferred to the acceptor end of tRNA(Pro). As ProRS can inadvertently accommodate and process non-cognate amino acids such as alanine and cysteine, to avoid such errors it has two additional distinct editing activities against alanine. One activity is designated as 'pretransfer' editing and involves the tRNA(Pro)-independent hydrolysis of activated Ala-AMP. The other activity is designated 'posttransfer' editing and involves deacylation of mischarged Ala-tRNA(Pro). The misacylated Cys-tRNA(Pro) is not edited by ProRS.</text>
</comment>
<comment type="catalytic activity">
    <reaction evidence="1">
        <text>tRNA(Pro) + L-proline + ATP = L-prolyl-tRNA(Pro) + AMP + diphosphate</text>
        <dbReference type="Rhea" id="RHEA:14305"/>
        <dbReference type="Rhea" id="RHEA-COMP:9700"/>
        <dbReference type="Rhea" id="RHEA-COMP:9702"/>
        <dbReference type="ChEBI" id="CHEBI:30616"/>
        <dbReference type="ChEBI" id="CHEBI:33019"/>
        <dbReference type="ChEBI" id="CHEBI:60039"/>
        <dbReference type="ChEBI" id="CHEBI:78442"/>
        <dbReference type="ChEBI" id="CHEBI:78532"/>
        <dbReference type="ChEBI" id="CHEBI:456215"/>
        <dbReference type="EC" id="6.1.1.15"/>
    </reaction>
</comment>
<comment type="subunit">
    <text evidence="1">Homodimer.</text>
</comment>
<comment type="subcellular location">
    <subcellularLocation>
        <location evidence="1">Cytoplasm</location>
    </subcellularLocation>
</comment>
<comment type="domain">
    <text evidence="1">Consists of three domains: the N-terminal catalytic domain, the editing domain and the C-terminal anticodon-binding domain.</text>
</comment>
<comment type="similarity">
    <text evidence="1">Belongs to the class-II aminoacyl-tRNA synthetase family. ProS type 1 subfamily.</text>
</comment>
<reference key="1">
    <citation type="journal article" date="2006" name="Proc. Natl. Acad. Sci. U.S.A.">
        <title>Comparative genomics of the lactic acid bacteria.</title>
        <authorList>
            <person name="Makarova K.S."/>
            <person name="Slesarev A."/>
            <person name="Wolf Y.I."/>
            <person name="Sorokin A."/>
            <person name="Mirkin B."/>
            <person name="Koonin E.V."/>
            <person name="Pavlov A."/>
            <person name="Pavlova N."/>
            <person name="Karamychev V."/>
            <person name="Polouchine N."/>
            <person name="Shakhova V."/>
            <person name="Grigoriev I."/>
            <person name="Lou Y."/>
            <person name="Rohksar D."/>
            <person name="Lucas S."/>
            <person name="Huang K."/>
            <person name="Goodstein D.M."/>
            <person name="Hawkins T."/>
            <person name="Plengvidhya V."/>
            <person name="Welker D."/>
            <person name="Hughes J."/>
            <person name="Goh Y."/>
            <person name="Benson A."/>
            <person name="Baldwin K."/>
            <person name="Lee J.-H."/>
            <person name="Diaz-Muniz I."/>
            <person name="Dosti B."/>
            <person name="Smeianov V."/>
            <person name="Wechter W."/>
            <person name="Barabote R."/>
            <person name="Lorca G."/>
            <person name="Altermann E."/>
            <person name="Barrangou R."/>
            <person name="Ganesan B."/>
            <person name="Xie Y."/>
            <person name="Rawsthorne H."/>
            <person name="Tamir D."/>
            <person name="Parker C."/>
            <person name="Breidt F."/>
            <person name="Broadbent J.R."/>
            <person name="Hutkins R."/>
            <person name="O'Sullivan D."/>
            <person name="Steele J."/>
            <person name="Unlu G."/>
            <person name="Saier M.H. Jr."/>
            <person name="Klaenhammer T."/>
            <person name="Richardson P."/>
            <person name="Kozyavkin S."/>
            <person name="Weimer B.C."/>
            <person name="Mills D.A."/>
        </authorList>
    </citation>
    <scope>NUCLEOTIDE SEQUENCE [LARGE SCALE GENOMIC DNA]</scope>
    <source>
        <strain>ATCC 367 / BCRC 12310 / CIP 105137 / JCM 1170 / LMG 11437 / NCIMB 947 / NCTC 947</strain>
    </source>
</reference>
<evidence type="ECO:0000255" key="1">
    <source>
        <dbReference type="HAMAP-Rule" id="MF_01569"/>
    </source>
</evidence>
<sequence>MKQSQLLIPTLKEVPNDAEALSHQMMLRAGYIRQVTAGMYAYLPLAFRVLTNIETIIREEMEKINAVEMLMPAVLPASLWQESGRYETYGPNLFKFKNRHDSDFILAPTHEETFTMLVRDAIKSYKRLPLVMYQIQPKYRDEDRPRYGLLRGREFIMKDAYSFSLSDEDLDRIYNQMEQAYENIFDRIGLNYRAIVGDGGAMGGKDSKEFSAIAPVGEDTIVYSDSSDYAANLEMAKSLFVSKKSHAQLADLEKIATPGVHSIAELAEFLDVKPAALVKSMLYIADDQPVMVLVRGDHEVNETKLKNYLNADFLNPATPEDAQKYLGANFGSLGPVGVSEDVKILADQYVGDMVNVAVGADEDEHHYLNANLDRDFRVDAFADLREVQPGDLSPDGSGVLKFTKGIEIGHIFKLGTRYSDALGATVLDEGGRQKPVVMGSYGIGVSRLLSAIAEQQADDKGLVWPRNIAPFDIHLVPVNLKKDDQAQLTSELEEQLTAKGYRILTDDRKERPGVKFADSDLMGIPVRITIGKKAGEGIVEIKIRKTGETVEVIKDEVASTVEILFKDID</sequence>
<proteinExistence type="inferred from homology"/>
<feature type="chain" id="PRO_0000288334" description="Proline--tRNA ligase">
    <location>
        <begin position="1"/>
        <end position="569"/>
    </location>
</feature>
<name>SYP_LEVBA</name>
<protein>
    <recommendedName>
        <fullName evidence="1">Proline--tRNA ligase</fullName>
        <ecNumber evidence="1">6.1.1.15</ecNumber>
    </recommendedName>
    <alternativeName>
        <fullName evidence="1">Prolyl-tRNA synthetase</fullName>
        <shortName evidence="1">ProRS</shortName>
    </alternativeName>
</protein>
<organism>
    <name type="scientific">Levilactobacillus brevis (strain ATCC 367 / BCRC 12310 / CIP 105137 / JCM 1170 / LMG 11437 / NCIMB 947 / NCTC 947)</name>
    <name type="common">Lactobacillus brevis</name>
    <dbReference type="NCBI Taxonomy" id="387344"/>
    <lineage>
        <taxon>Bacteria</taxon>
        <taxon>Bacillati</taxon>
        <taxon>Bacillota</taxon>
        <taxon>Bacilli</taxon>
        <taxon>Lactobacillales</taxon>
        <taxon>Lactobacillaceae</taxon>
        <taxon>Levilactobacillus</taxon>
    </lineage>
</organism>
<keyword id="KW-0030">Aminoacyl-tRNA synthetase</keyword>
<keyword id="KW-0067">ATP-binding</keyword>
<keyword id="KW-0963">Cytoplasm</keyword>
<keyword id="KW-0436">Ligase</keyword>
<keyword id="KW-0547">Nucleotide-binding</keyword>
<keyword id="KW-0648">Protein biosynthesis</keyword>
<keyword id="KW-1185">Reference proteome</keyword>
<dbReference type="EC" id="6.1.1.15" evidence="1"/>
<dbReference type="EMBL" id="CP000416">
    <property type="protein sequence ID" value="ABJ64444.1"/>
    <property type="molecule type" value="Genomic_DNA"/>
</dbReference>
<dbReference type="RefSeq" id="WP_011668017.1">
    <property type="nucleotide sequence ID" value="NC_008497.1"/>
</dbReference>
<dbReference type="SMR" id="Q03QS8"/>
<dbReference type="STRING" id="387344.LVIS_1342"/>
<dbReference type="KEGG" id="lbr:LVIS_1342"/>
<dbReference type="PATRIC" id="fig|387344.15.peg.1276"/>
<dbReference type="eggNOG" id="COG0442">
    <property type="taxonomic scope" value="Bacteria"/>
</dbReference>
<dbReference type="HOGENOM" id="CLU_016739_0_0_9"/>
<dbReference type="Proteomes" id="UP000001652">
    <property type="component" value="Chromosome"/>
</dbReference>
<dbReference type="GO" id="GO:0005829">
    <property type="term" value="C:cytosol"/>
    <property type="evidence" value="ECO:0007669"/>
    <property type="project" value="TreeGrafter"/>
</dbReference>
<dbReference type="GO" id="GO:0002161">
    <property type="term" value="F:aminoacyl-tRNA deacylase activity"/>
    <property type="evidence" value="ECO:0007669"/>
    <property type="project" value="InterPro"/>
</dbReference>
<dbReference type="GO" id="GO:0005524">
    <property type="term" value="F:ATP binding"/>
    <property type="evidence" value="ECO:0007669"/>
    <property type="project" value="UniProtKB-UniRule"/>
</dbReference>
<dbReference type="GO" id="GO:0140096">
    <property type="term" value="F:catalytic activity, acting on a protein"/>
    <property type="evidence" value="ECO:0007669"/>
    <property type="project" value="UniProtKB-ARBA"/>
</dbReference>
<dbReference type="GO" id="GO:0004827">
    <property type="term" value="F:proline-tRNA ligase activity"/>
    <property type="evidence" value="ECO:0007669"/>
    <property type="project" value="UniProtKB-UniRule"/>
</dbReference>
<dbReference type="GO" id="GO:0016740">
    <property type="term" value="F:transferase activity"/>
    <property type="evidence" value="ECO:0007669"/>
    <property type="project" value="UniProtKB-ARBA"/>
</dbReference>
<dbReference type="GO" id="GO:0006433">
    <property type="term" value="P:prolyl-tRNA aminoacylation"/>
    <property type="evidence" value="ECO:0007669"/>
    <property type="project" value="UniProtKB-UniRule"/>
</dbReference>
<dbReference type="CDD" id="cd04334">
    <property type="entry name" value="ProRS-INS"/>
    <property type="match status" value="1"/>
</dbReference>
<dbReference type="CDD" id="cd00861">
    <property type="entry name" value="ProRS_anticodon_short"/>
    <property type="match status" value="1"/>
</dbReference>
<dbReference type="CDD" id="cd00779">
    <property type="entry name" value="ProRS_core_prok"/>
    <property type="match status" value="1"/>
</dbReference>
<dbReference type="FunFam" id="3.40.50.800:FF:000011">
    <property type="entry name" value="Proline--tRNA ligase"/>
    <property type="match status" value="1"/>
</dbReference>
<dbReference type="Gene3D" id="3.40.50.800">
    <property type="entry name" value="Anticodon-binding domain"/>
    <property type="match status" value="1"/>
</dbReference>
<dbReference type="Gene3D" id="3.30.930.10">
    <property type="entry name" value="Bira Bifunctional Protein, Domain 2"/>
    <property type="match status" value="2"/>
</dbReference>
<dbReference type="Gene3D" id="3.90.960.10">
    <property type="entry name" value="YbaK/aminoacyl-tRNA synthetase-associated domain"/>
    <property type="match status" value="1"/>
</dbReference>
<dbReference type="HAMAP" id="MF_01569">
    <property type="entry name" value="Pro_tRNA_synth_type1"/>
    <property type="match status" value="1"/>
</dbReference>
<dbReference type="InterPro" id="IPR002314">
    <property type="entry name" value="aa-tRNA-synt_IIb"/>
</dbReference>
<dbReference type="InterPro" id="IPR006195">
    <property type="entry name" value="aa-tRNA-synth_II"/>
</dbReference>
<dbReference type="InterPro" id="IPR045864">
    <property type="entry name" value="aa-tRNA-synth_II/BPL/LPL"/>
</dbReference>
<dbReference type="InterPro" id="IPR004154">
    <property type="entry name" value="Anticodon-bd"/>
</dbReference>
<dbReference type="InterPro" id="IPR036621">
    <property type="entry name" value="Anticodon-bd_dom_sf"/>
</dbReference>
<dbReference type="InterPro" id="IPR002316">
    <property type="entry name" value="Pro-tRNA-ligase_IIa"/>
</dbReference>
<dbReference type="InterPro" id="IPR004500">
    <property type="entry name" value="Pro-tRNA-synth_IIa_bac-type"/>
</dbReference>
<dbReference type="InterPro" id="IPR023717">
    <property type="entry name" value="Pro-tRNA-Synthase_IIa_type1"/>
</dbReference>
<dbReference type="InterPro" id="IPR050062">
    <property type="entry name" value="Pro-tRNA_synthetase"/>
</dbReference>
<dbReference type="InterPro" id="IPR044140">
    <property type="entry name" value="ProRS_anticodon_short"/>
</dbReference>
<dbReference type="InterPro" id="IPR033730">
    <property type="entry name" value="ProRS_core_prok"/>
</dbReference>
<dbReference type="InterPro" id="IPR036754">
    <property type="entry name" value="YbaK/aa-tRNA-synt-asso_dom_sf"/>
</dbReference>
<dbReference type="InterPro" id="IPR007214">
    <property type="entry name" value="YbaK/aa-tRNA-synth-assoc-dom"/>
</dbReference>
<dbReference type="NCBIfam" id="NF006625">
    <property type="entry name" value="PRK09194.1"/>
    <property type="match status" value="1"/>
</dbReference>
<dbReference type="NCBIfam" id="TIGR00409">
    <property type="entry name" value="proS_fam_II"/>
    <property type="match status" value="1"/>
</dbReference>
<dbReference type="PANTHER" id="PTHR42753">
    <property type="entry name" value="MITOCHONDRIAL RIBOSOME PROTEIN L39/PROLYL-TRNA LIGASE FAMILY MEMBER"/>
    <property type="match status" value="1"/>
</dbReference>
<dbReference type="PANTHER" id="PTHR42753:SF2">
    <property type="entry name" value="PROLINE--TRNA LIGASE"/>
    <property type="match status" value="1"/>
</dbReference>
<dbReference type="Pfam" id="PF03129">
    <property type="entry name" value="HGTP_anticodon"/>
    <property type="match status" value="1"/>
</dbReference>
<dbReference type="Pfam" id="PF00587">
    <property type="entry name" value="tRNA-synt_2b"/>
    <property type="match status" value="1"/>
</dbReference>
<dbReference type="Pfam" id="PF04073">
    <property type="entry name" value="tRNA_edit"/>
    <property type="match status" value="1"/>
</dbReference>
<dbReference type="PRINTS" id="PR01046">
    <property type="entry name" value="TRNASYNTHPRO"/>
</dbReference>
<dbReference type="SUPFAM" id="SSF52954">
    <property type="entry name" value="Class II aaRS ABD-related"/>
    <property type="match status" value="1"/>
</dbReference>
<dbReference type="SUPFAM" id="SSF55681">
    <property type="entry name" value="Class II aaRS and biotin synthetases"/>
    <property type="match status" value="1"/>
</dbReference>
<dbReference type="SUPFAM" id="SSF55826">
    <property type="entry name" value="YbaK/ProRS associated domain"/>
    <property type="match status" value="1"/>
</dbReference>
<dbReference type="PROSITE" id="PS50862">
    <property type="entry name" value="AA_TRNA_LIGASE_II"/>
    <property type="match status" value="1"/>
</dbReference>
<accession>Q03QS8</accession>
<gene>
    <name evidence="1" type="primary">proS</name>
    <name type="ordered locus">LVIS_1342</name>
</gene>